<sequence length="196" mass="22192">MAKNGLVLCILVVSLLLDQTDGYPSRMKARKHSKRRVKAKDDDLKSQVEKLWREVNALKEMQALQTVCLRGTKVHKKCYLASEGLKHYHEANEDCISKGGTLVVPRNSDEINALRDYGKRSLPGVNDFWLGINDMVTEGKFLDVHGFAVSFLNWDRAQPSGGKRENCVLFSQSAQGKWSDEACRSSKRYICEFIIP</sequence>
<accession>Q9EPW4</accession>
<evidence type="ECO:0000250" key="1"/>
<evidence type="ECO:0000255" key="2"/>
<evidence type="ECO:0000255" key="3">
    <source>
        <dbReference type="PROSITE-ProRule" id="PRU00040"/>
    </source>
</evidence>
<comment type="function">
    <text evidence="1">Promotes cell adhesion to laminin and fibronectin.</text>
</comment>
<comment type="subcellular location">
    <subcellularLocation>
        <location evidence="1">Secreted</location>
    </subcellularLocation>
</comment>
<reference key="1">
    <citation type="submission" date="2000-10" db="EMBL/GenBank/DDBJ databases">
        <title>Mouse homolog of human CLECSF1, a cartilage derived C-type lectin.</title>
        <authorList>
            <person name="Neame P.J."/>
            <person name="Grimm D.R."/>
        </authorList>
    </citation>
    <scope>NUCLEOTIDE SEQUENCE [GENOMIC DNA]</scope>
    <source>
        <strain>ES129/Sv</strain>
    </source>
</reference>
<organism>
    <name type="scientific">Mus musculus</name>
    <name type="common">Mouse</name>
    <dbReference type="NCBI Taxonomy" id="10090"/>
    <lineage>
        <taxon>Eukaryota</taxon>
        <taxon>Metazoa</taxon>
        <taxon>Chordata</taxon>
        <taxon>Craniata</taxon>
        <taxon>Vertebrata</taxon>
        <taxon>Euteleostomi</taxon>
        <taxon>Mammalia</taxon>
        <taxon>Eutheria</taxon>
        <taxon>Euarchontoglires</taxon>
        <taxon>Glires</taxon>
        <taxon>Rodentia</taxon>
        <taxon>Myomorpha</taxon>
        <taxon>Muroidea</taxon>
        <taxon>Muridae</taxon>
        <taxon>Murinae</taxon>
        <taxon>Mus</taxon>
        <taxon>Mus</taxon>
    </lineage>
</organism>
<protein>
    <recommendedName>
        <fullName>C-type lectin domain family 3 member A</fullName>
    </recommendedName>
    <alternativeName>
        <fullName>C-type lectin superfamily member 1</fullName>
    </alternativeName>
    <alternativeName>
        <fullName>Cartilage-derived C-type lectin</fullName>
    </alternativeName>
</protein>
<feature type="signal peptide" evidence="2">
    <location>
        <begin position="1"/>
        <end position="22"/>
    </location>
</feature>
<feature type="chain" id="PRO_0000017375" description="C-type lectin domain family 3 member A">
    <location>
        <begin position="23"/>
        <end position="196"/>
    </location>
</feature>
<feature type="domain" description="C-type lectin" evidence="3">
    <location>
        <begin position="74"/>
        <end position="192"/>
    </location>
</feature>
<feature type="disulfide bond" evidence="3">
    <location>
        <begin position="68"/>
        <end position="78"/>
    </location>
</feature>
<feature type="disulfide bond" evidence="3">
    <location>
        <begin position="95"/>
        <end position="191"/>
    </location>
</feature>
<feature type="disulfide bond" evidence="3">
    <location>
        <begin position="167"/>
        <end position="183"/>
    </location>
</feature>
<proteinExistence type="inferred from homology"/>
<name>CLC3A_MOUSE</name>
<gene>
    <name type="primary">Clec3a</name>
    <name type="synonym">Clecsf1</name>
    <name type="synonym">Gm796</name>
</gene>
<dbReference type="EMBL" id="AF317204">
    <property type="protein sequence ID" value="AAG48620.1"/>
    <property type="molecule type" value="Genomic_DNA"/>
</dbReference>
<dbReference type="CCDS" id="CCDS22690.1"/>
<dbReference type="RefSeq" id="NP_001007224.1">
    <property type="nucleotide sequence ID" value="NM_001007223.4"/>
</dbReference>
<dbReference type="SMR" id="Q9EPW4"/>
<dbReference type="FunCoup" id="Q9EPW4">
    <property type="interactions" value="463"/>
</dbReference>
<dbReference type="STRING" id="10090.ENSMUSP00000009018"/>
<dbReference type="PhosphoSitePlus" id="Q9EPW4"/>
<dbReference type="jPOST" id="Q9EPW4"/>
<dbReference type="PaxDb" id="10090-ENSMUSP00000009018"/>
<dbReference type="ProteomicsDB" id="283366"/>
<dbReference type="Antibodypedia" id="30410">
    <property type="antibodies" value="62 antibodies from 13 providers"/>
</dbReference>
<dbReference type="DNASU" id="403395"/>
<dbReference type="Ensembl" id="ENSMUST00000009018.4">
    <property type="protein sequence ID" value="ENSMUSP00000009018.4"/>
    <property type="gene ID" value="ENSMUSG00000008874.4"/>
</dbReference>
<dbReference type="GeneID" id="403395"/>
<dbReference type="KEGG" id="mmu:403395"/>
<dbReference type="UCSC" id="uc009nob.2">
    <property type="organism name" value="mouse"/>
</dbReference>
<dbReference type="AGR" id="MGI:2685642"/>
<dbReference type="CTD" id="10143"/>
<dbReference type="MGI" id="MGI:2685642">
    <property type="gene designation" value="Clec3a"/>
</dbReference>
<dbReference type="VEuPathDB" id="HostDB:ENSMUSG00000008874"/>
<dbReference type="eggNOG" id="KOG4297">
    <property type="taxonomic scope" value="Eukaryota"/>
</dbReference>
<dbReference type="GeneTree" id="ENSGT00950000183186"/>
<dbReference type="HOGENOM" id="CLU_049894_6_0_1"/>
<dbReference type="InParanoid" id="Q9EPW4"/>
<dbReference type="OMA" id="RYICEFL"/>
<dbReference type="OrthoDB" id="10032136at2759"/>
<dbReference type="PhylomeDB" id="Q9EPW4"/>
<dbReference type="TreeFam" id="TF330481"/>
<dbReference type="BioGRID-ORCS" id="403395">
    <property type="hits" value="1 hit in 76 CRISPR screens"/>
</dbReference>
<dbReference type="PRO" id="PR:Q9EPW4"/>
<dbReference type="Proteomes" id="UP000000589">
    <property type="component" value="Chromosome 8"/>
</dbReference>
<dbReference type="RNAct" id="Q9EPW4">
    <property type="molecule type" value="protein"/>
</dbReference>
<dbReference type="Bgee" id="ENSMUSG00000008874">
    <property type="expression patterns" value="Expressed in intervertebral disk and 23 other cell types or tissues"/>
</dbReference>
<dbReference type="ExpressionAtlas" id="Q9EPW4">
    <property type="expression patterns" value="baseline and differential"/>
</dbReference>
<dbReference type="GO" id="GO:0005576">
    <property type="term" value="C:extracellular region"/>
    <property type="evidence" value="ECO:0007669"/>
    <property type="project" value="UniProtKB-SubCell"/>
</dbReference>
<dbReference type="GO" id="GO:0030246">
    <property type="term" value="F:carbohydrate binding"/>
    <property type="evidence" value="ECO:0007669"/>
    <property type="project" value="UniProtKB-KW"/>
</dbReference>
<dbReference type="CDD" id="cd03596">
    <property type="entry name" value="CLECT_tetranectin_like"/>
    <property type="match status" value="1"/>
</dbReference>
<dbReference type="FunFam" id="3.10.100.10:FF:000010">
    <property type="entry name" value="C-type lectin domain family 3 member A"/>
    <property type="match status" value="1"/>
</dbReference>
<dbReference type="Gene3D" id="3.10.100.10">
    <property type="entry name" value="Mannose-Binding Protein A, subunit A"/>
    <property type="match status" value="1"/>
</dbReference>
<dbReference type="InterPro" id="IPR001304">
    <property type="entry name" value="C-type_lectin-like"/>
</dbReference>
<dbReference type="InterPro" id="IPR016186">
    <property type="entry name" value="C-type_lectin-like/link_sf"/>
</dbReference>
<dbReference type="InterPro" id="IPR018378">
    <property type="entry name" value="C-type_lectin_CS"/>
</dbReference>
<dbReference type="InterPro" id="IPR051663">
    <property type="entry name" value="CLec_Tetranectin-domain"/>
</dbReference>
<dbReference type="InterPro" id="IPR016187">
    <property type="entry name" value="CTDL_fold"/>
</dbReference>
<dbReference type="PANTHER" id="PTHR22799:SF2">
    <property type="entry name" value="C-TYPE LECTIN DOMAIN FAMILY 3 MEMBER A"/>
    <property type="match status" value="1"/>
</dbReference>
<dbReference type="PANTHER" id="PTHR22799">
    <property type="entry name" value="TETRANECTIN-RELATED"/>
    <property type="match status" value="1"/>
</dbReference>
<dbReference type="Pfam" id="PF00059">
    <property type="entry name" value="Lectin_C"/>
    <property type="match status" value="1"/>
</dbReference>
<dbReference type="SMART" id="SM00034">
    <property type="entry name" value="CLECT"/>
    <property type="match status" value="1"/>
</dbReference>
<dbReference type="SUPFAM" id="SSF56436">
    <property type="entry name" value="C-type lectin-like"/>
    <property type="match status" value="1"/>
</dbReference>
<dbReference type="PROSITE" id="PS00615">
    <property type="entry name" value="C_TYPE_LECTIN_1"/>
    <property type="match status" value="1"/>
</dbReference>
<dbReference type="PROSITE" id="PS50041">
    <property type="entry name" value="C_TYPE_LECTIN_2"/>
    <property type="match status" value="1"/>
</dbReference>
<keyword id="KW-1015">Disulfide bond</keyword>
<keyword id="KW-0430">Lectin</keyword>
<keyword id="KW-1185">Reference proteome</keyword>
<keyword id="KW-0964">Secreted</keyword>
<keyword id="KW-0732">Signal</keyword>